<sequence length="363" mass="40911">MIGSASDSSSKLGRLRFLSETAAIKVSPLILGEVSYDGARSDFLKSMNKNRAFELLDTFYEAGGNFIDAANNCQNEQSEEWIGEWIQSRRLRDQIVIATKFIKSDKKYKAGESNTANYCGNHKRSLHVSVRDSLRKLQTDWIDILYVHWWDYMSSIEEFMDSLHILVQQGKVLYLGVSDTPAWVVSAANYYATSYGKTPFSIYQGKWNVLNRDFERDIIPMARHFGMALAPWDVMGGGRFQSKKAMEERRKNGEGIRSFVGASEQTDAEIKISEALAKIAEEHGTESVTAIAIAYVRSKAKNFFPSVEGGKIEDLKENIKALSIDLTPDNIKYLESIVPFDIGFPNNFIVLNSLTQKYGTNNV</sequence>
<name>AAD3_YEAST</name>
<gene>
    <name type="primary">AAD3</name>
    <name type="ordered locus">YCR107W</name>
</gene>
<proteinExistence type="inferred from homology"/>
<protein>
    <recommendedName>
        <fullName>Putative aryl-alcohol dehydrogenase AAD3</fullName>
        <ecNumber>1.1.1.-</ecNumber>
    </recommendedName>
</protein>
<evidence type="ECO:0000305" key="1"/>
<feature type="chain" id="PRO_0000070365" description="Putative aryl-alcohol dehydrogenase AAD3">
    <location>
        <begin position="1"/>
        <end position="363"/>
    </location>
</feature>
<dbReference type="EC" id="1.1.1.-"/>
<dbReference type="EMBL" id="X59720">
    <property type="protein sequence ID" value="CAA42239.1"/>
    <property type="molecule type" value="Genomic_DNA"/>
</dbReference>
<dbReference type="EMBL" id="BK006937">
    <property type="protein sequence ID" value="DAA07576.1"/>
    <property type="molecule type" value="Genomic_DNA"/>
</dbReference>
<dbReference type="PIR" id="S19419">
    <property type="entry name" value="S19419"/>
</dbReference>
<dbReference type="RefSeq" id="NP_010032.1">
    <property type="nucleotide sequence ID" value="NM_001178814.1"/>
</dbReference>
<dbReference type="SMR" id="P25612"/>
<dbReference type="BioGRID" id="31079">
    <property type="interactions" value="37"/>
</dbReference>
<dbReference type="DIP" id="DIP-2610N"/>
<dbReference type="FunCoup" id="P25612">
    <property type="interactions" value="96"/>
</dbReference>
<dbReference type="IntAct" id="P25612">
    <property type="interactions" value="3"/>
</dbReference>
<dbReference type="MINT" id="P25612"/>
<dbReference type="STRING" id="4932.YCR107W"/>
<dbReference type="PaxDb" id="4932-YCR107W"/>
<dbReference type="PeptideAtlas" id="P25612"/>
<dbReference type="EnsemblFungi" id="YCR107W_mRNA">
    <property type="protein sequence ID" value="YCR107W"/>
    <property type="gene ID" value="YCR107W"/>
</dbReference>
<dbReference type="GeneID" id="850471"/>
<dbReference type="KEGG" id="sce:YCR107W"/>
<dbReference type="AGR" id="SGD:S000000704"/>
<dbReference type="SGD" id="S000000704">
    <property type="gene designation" value="AAD3"/>
</dbReference>
<dbReference type="VEuPathDB" id="FungiDB:YCR107W"/>
<dbReference type="eggNOG" id="KOG1575">
    <property type="taxonomic scope" value="Eukaryota"/>
</dbReference>
<dbReference type="GeneTree" id="ENSGT00940000176306"/>
<dbReference type="HOGENOM" id="CLU_023205_2_2_1"/>
<dbReference type="InParanoid" id="P25612"/>
<dbReference type="OMA" id="SNYLGWQ"/>
<dbReference type="OrthoDB" id="48988at2759"/>
<dbReference type="BioCyc" id="YEAST:YCR107W-MONOMER"/>
<dbReference type="BioGRID-ORCS" id="850471">
    <property type="hits" value="0 hits in 10 CRISPR screens"/>
</dbReference>
<dbReference type="PRO" id="PR:P25612"/>
<dbReference type="Proteomes" id="UP000002311">
    <property type="component" value="Chromosome III"/>
</dbReference>
<dbReference type="RNAct" id="P25612">
    <property type="molecule type" value="protein"/>
</dbReference>
<dbReference type="GO" id="GO:0047681">
    <property type="term" value="F:aryl-alcohol dehydrogenase (NADP+) activity"/>
    <property type="evidence" value="ECO:0000250"/>
    <property type="project" value="SGD"/>
</dbReference>
<dbReference type="GO" id="GO:0006081">
    <property type="term" value="P:aldehyde metabolic process"/>
    <property type="evidence" value="ECO:0000250"/>
    <property type="project" value="SGD"/>
</dbReference>
<dbReference type="CDD" id="cd19147">
    <property type="entry name" value="AKR_AKR9A3_9B1-4"/>
    <property type="match status" value="1"/>
</dbReference>
<dbReference type="FunFam" id="3.20.20.100:FF:000024">
    <property type="entry name" value="Aryl-alcohol dehydrogenase"/>
    <property type="match status" value="1"/>
</dbReference>
<dbReference type="Gene3D" id="3.20.20.100">
    <property type="entry name" value="NADP-dependent oxidoreductase domain"/>
    <property type="match status" value="1"/>
</dbReference>
<dbReference type="InterPro" id="IPR050523">
    <property type="entry name" value="AKR_Detox_Biosynth"/>
</dbReference>
<dbReference type="InterPro" id="IPR023210">
    <property type="entry name" value="NADP_OxRdtase_dom"/>
</dbReference>
<dbReference type="InterPro" id="IPR036812">
    <property type="entry name" value="NADP_OxRdtase_dom_sf"/>
</dbReference>
<dbReference type="PANTHER" id="PTHR43364:SF2">
    <property type="entry name" value="ARYL-ALCOHOL DEHYDROGENASE AAD10-RELATED"/>
    <property type="match status" value="1"/>
</dbReference>
<dbReference type="PANTHER" id="PTHR43364">
    <property type="entry name" value="NADH-SPECIFIC METHYLGLYOXAL REDUCTASE-RELATED"/>
    <property type="match status" value="1"/>
</dbReference>
<dbReference type="Pfam" id="PF00248">
    <property type="entry name" value="Aldo_ket_red"/>
    <property type="match status" value="1"/>
</dbReference>
<dbReference type="SUPFAM" id="SSF51430">
    <property type="entry name" value="NAD(P)-linked oxidoreductase"/>
    <property type="match status" value="1"/>
</dbReference>
<organism>
    <name type="scientific">Saccharomyces cerevisiae (strain ATCC 204508 / S288c)</name>
    <name type="common">Baker's yeast</name>
    <dbReference type="NCBI Taxonomy" id="559292"/>
    <lineage>
        <taxon>Eukaryota</taxon>
        <taxon>Fungi</taxon>
        <taxon>Dikarya</taxon>
        <taxon>Ascomycota</taxon>
        <taxon>Saccharomycotina</taxon>
        <taxon>Saccharomycetes</taxon>
        <taxon>Saccharomycetales</taxon>
        <taxon>Saccharomycetaceae</taxon>
        <taxon>Saccharomyces</taxon>
    </lineage>
</organism>
<keyword id="KW-0560">Oxidoreductase</keyword>
<keyword id="KW-1185">Reference proteome</keyword>
<comment type="similarity">
    <text evidence="1">Belongs to the aldo/keto reductase family. Aldo/keto reductase 2 subfamily.</text>
</comment>
<accession>P25612</accession>
<accession>D6VRA7</accession>
<reference key="1">
    <citation type="journal article" date="1992" name="Nature">
        <title>The complete DNA sequence of yeast chromosome III.</title>
        <authorList>
            <person name="Oliver S.G."/>
            <person name="van der Aart Q.J.M."/>
            <person name="Agostoni-Carbone M.L."/>
            <person name="Aigle M."/>
            <person name="Alberghina L."/>
            <person name="Alexandraki D."/>
            <person name="Antoine G."/>
            <person name="Anwar R."/>
            <person name="Ballesta J.P.G."/>
            <person name="Benit P."/>
            <person name="Berben G."/>
            <person name="Bergantino E."/>
            <person name="Biteau N."/>
            <person name="Bolle P.-A."/>
            <person name="Bolotin-Fukuhara M."/>
            <person name="Brown A."/>
            <person name="Brown A.J.P."/>
            <person name="Buhler J.-M."/>
            <person name="Carcano C."/>
            <person name="Carignani G."/>
            <person name="Cederberg H."/>
            <person name="Chanet R."/>
            <person name="Contreras R."/>
            <person name="Crouzet M."/>
            <person name="Daignan-Fornier B."/>
            <person name="Defoor E."/>
            <person name="Delgado M.D."/>
            <person name="Demolder J."/>
            <person name="Doira C."/>
            <person name="Dubois E."/>
            <person name="Dujon B."/>
            <person name="Duesterhoeft A."/>
            <person name="Erdmann D."/>
            <person name="Esteban M."/>
            <person name="Fabre F."/>
            <person name="Fairhead C."/>
            <person name="Faye G."/>
            <person name="Feldmann H."/>
            <person name="Fiers W."/>
            <person name="Francingues-Gaillard M.-C."/>
            <person name="Franco L."/>
            <person name="Frontali L."/>
            <person name="Fukuhara H."/>
            <person name="Fuller L.J."/>
            <person name="Galland P."/>
            <person name="Gent M.E."/>
            <person name="Gigot D."/>
            <person name="Gilliquet V."/>
            <person name="Glansdorff N."/>
            <person name="Goffeau A."/>
            <person name="Grenson M."/>
            <person name="Grisanti P."/>
            <person name="Grivell L.A."/>
            <person name="de Haan M."/>
            <person name="Haasemann M."/>
            <person name="Hatat D."/>
            <person name="Hoenicka J."/>
            <person name="Hegemann J.H."/>
            <person name="Herbert C.J."/>
            <person name="Hilger F."/>
            <person name="Hohmann S."/>
            <person name="Hollenberg C.P."/>
            <person name="Huse K."/>
            <person name="Iborra F."/>
            <person name="Indge K.J."/>
            <person name="Isono K."/>
            <person name="Jacq C."/>
            <person name="Jacquet M."/>
            <person name="James C.M."/>
            <person name="Jauniaux J.-C."/>
            <person name="Jia Y."/>
            <person name="Jimenez A."/>
            <person name="Kelly A."/>
            <person name="Kleinhans U."/>
            <person name="Kreisl P."/>
            <person name="Lanfranchi G."/>
            <person name="Lewis C."/>
            <person name="van der Linden C.G."/>
            <person name="Lucchini G."/>
            <person name="Lutzenkirchen K."/>
            <person name="Maat M.J."/>
            <person name="Mallet L."/>
            <person name="Mannhaupt G."/>
            <person name="Martegani E."/>
            <person name="Mathieu A."/>
            <person name="Maurer C.T.C."/>
            <person name="McConnell D."/>
            <person name="McKee R.A."/>
            <person name="Messenguy F."/>
            <person name="Mewes H.-W."/>
            <person name="Molemans F."/>
            <person name="Montague M.A."/>
            <person name="Muzi Falconi M."/>
            <person name="Navas L."/>
            <person name="Newlon C.S."/>
            <person name="Noone D."/>
            <person name="Pallier C."/>
            <person name="Panzeri L."/>
            <person name="Pearson B.M."/>
            <person name="Perea J."/>
            <person name="Philippsen P."/>
            <person name="Pierard A."/>
            <person name="Planta R.J."/>
            <person name="Plevani P."/>
            <person name="Poetsch B."/>
            <person name="Pohl F.M."/>
            <person name="Purnelle B."/>
            <person name="Ramezani Rad M."/>
            <person name="Rasmussen S.W."/>
            <person name="Raynal A."/>
            <person name="Remacha M.A."/>
            <person name="Richterich P."/>
            <person name="Roberts A.B."/>
            <person name="Rodriguez F."/>
            <person name="Sanz E."/>
            <person name="Schaaff-Gerstenschlaeger I."/>
            <person name="Scherens B."/>
            <person name="Schweitzer B."/>
            <person name="Shu Y."/>
            <person name="Skala J."/>
            <person name="Slonimski P.P."/>
            <person name="Sor F."/>
            <person name="Soustelle C."/>
            <person name="Spiegelberg R."/>
            <person name="Stateva L.I."/>
            <person name="Steensma H.Y."/>
            <person name="Steiner S."/>
            <person name="Thierry A."/>
            <person name="Thireos G."/>
            <person name="Tzermia M."/>
            <person name="Urrestarazu L.A."/>
            <person name="Valle G."/>
            <person name="Vetter I."/>
            <person name="van Vliet-Reedijk J.C."/>
            <person name="Voet M."/>
            <person name="Volckaert G."/>
            <person name="Vreken P."/>
            <person name="Wang H."/>
            <person name="Warmington J.R."/>
            <person name="von Wettstein D."/>
            <person name="Wicksteed B.L."/>
            <person name="Wilson C."/>
            <person name="Wurst H."/>
            <person name="Xu G."/>
            <person name="Yoshikawa A."/>
            <person name="Zimmermann F.K."/>
            <person name="Sgouros J.G."/>
        </authorList>
    </citation>
    <scope>NUCLEOTIDE SEQUENCE [LARGE SCALE GENOMIC DNA]</scope>
    <source>
        <strain>ATCC 204508 / S288c</strain>
    </source>
</reference>
<reference key="2">
    <citation type="journal article" date="2014" name="G3 (Bethesda)">
        <title>The reference genome sequence of Saccharomyces cerevisiae: Then and now.</title>
        <authorList>
            <person name="Engel S.R."/>
            <person name="Dietrich F.S."/>
            <person name="Fisk D.G."/>
            <person name="Binkley G."/>
            <person name="Balakrishnan R."/>
            <person name="Costanzo M.C."/>
            <person name="Dwight S.S."/>
            <person name="Hitz B.C."/>
            <person name="Karra K."/>
            <person name="Nash R.S."/>
            <person name="Weng S."/>
            <person name="Wong E.D."/>
            <person name="Lloyd P."/>
            <person name="Skrzypek M.S."/>
            <person name="Miyasato S.R."/>
            <person name="Simison M."/>
            <person name="Cherry J.M."/>
        </authorList>
    </citation>
    <scope>GENOME REANNOTATION</scope>
    <source>
        <strain>ATCC 204508 / S288c</strain>
    </source>
</reference>